<accession>B6YTM4</accession>
<keyword id="KW-0963">Cytoplasm</keyword>
<keyword id="KW-0385">Hypusine</keyword>
<keyword id="KW-0396">Initiation factor</keyword>
<keyword id="KW-0648">Protein biosynthesis</keyword>
<protein>
    <recommendedName>
        <fullName evidence="1">Translation initiation factor 5A</fullName>
    </recommendedName>
    <alternativeName>
        <fullName evidence="1">Hypusine-containing protein</fullName>
    </alternativeName>
    <alternativeName>
        <fullName evidence="1">eIF-5A</fullName>
    </alternativeName>
</protein>
<feature type="chain" id="PRO_1000093011" description="Translation initiation factor 5A">
    <location>
        <begin position="1"/>
        <end position="136"/>
    </location>
</feature>
<feature type="modified residue" description="Hypusine" evidence="1">
    <location>
        <position position="37"/>
    </location>
</feature>
<gene>
    <name type="primary">eIF5A</name>
    <name type="ordered locus">TON_0426</name>
</gene>
<organism>
    <name type="scientific">Thermococcus onnurineus (strain NA1)</name>
    <dbReference type="NCBI Taxonomy" id="523850"/>
    <lineage>
        <taxon>Archaea</taxon>
        <taxon>Methanobacteriati</taxon>
        <taxon>Methanobacteriota</taxon>
        <taxon>Thermococci</taxon>
        <taxon>Thermococcales</taxon>
        <taxon>Thermococcaceae</taxon>
        <taxon>Thermococcus</taxon>
    </lineage>
</organism>
<evidence type="ECO:0000255" key="1">
    <source>
        <dbReference type="HAMAP-Rule" id="MF_00085"/>
    </source>
</evidence>
<reference key="1">
    <citation type="journal article" date="2008" name="J. Bacteriol.">
        <title>The complete genome sequence of Thermococcus onnurineus NA1 reveals a mixed heterotrophic and carboxydotrophic metabolism.</title>
        <authorList>
            <person name="Lee H.S."/>
            <person name="Kang S.G."/>
            <person name="Bae S.S."/>
            <person name="Lim J.K."/>
            <person name="Cho Y."/>
            <person name="Kim Y.J."/>
            <person name="Jeon J.H."/>
            <person name="Cha S.-S."/>
            <person name="Kwon K.K."/>
            <person name="Kim H.-T."/>
            <person name="Park C.-J."/>
            <person name="Lee H.-W."/>
            <person name="Kim S.I."/>
            <person name="Chun J."/>
            <person name="Colwell R.R."/>
            <person name="Kim S.-J."/>
            <person name="Lee J.-H."/>
        </authorList>
    </citation>
    <scope>NUCLEOTIDE SEQUENCE [LARGE SCALE GENOMIC DNA]</scope>
    <source>
        <strain>NA1</strain>
    </source>
</reference>
<proteinExistence type="inferred from homology"/>
<dbReference type="EMBL" id="CP000855">
    <property type="protein sequence ID" value="ACJ15911.1"/>
    <property type="molecule type" value="Genomic_DNA"/>
</dbReference>
<dbReference type="RefSeq" id="WP_012571383.1">
    <property type="nucleotide sequence ID" value="NC_011529.1"/>
</dbReference>
<dbReference type="SMR" id="B6YTM4"/>
<dbReference type="STRING" id="523850.TON_0426"/>
<dbReference type="GeneID" id="7016721"/>
<dbReference type="KEGG" id="ton:TON_0426"/>
<dbReference type="PATRIC" id="fig|523850.10.peg.428"/>
<dbReference type="eggNOG" id="arCOG04277">
    <property type="taxonomic scope" value="Archaea"/>
</dbReference>
<dbReference type="HOGENOM" id="CLU_102600_3_0_2"/>
<dbReference type="OrthoDB" id="23689at2157"/>
<dbReference type="Proteomes" id="UP000002727">
    <property type="component" value="Chromosome"/>
</dbReference>
<dbReference type="GO" id="GO:0005737">
    <property type="term" value="C:cytoplasm"/>
    <property type="evidence" value="ECO:0007669"/>
    <property type="project" value="UniProtKB-SubCell"/>
</dbReference>
<dbReference type="GO" id="GO:0043022">
    <property type="term" value="F:ribosome binding"/>
    <property type="evidence" value="ECO:0007669"/>
    <property type="project" value="InterPro"/>
</dbReference>
<dbReference type="GO" id="GO:0003723">
    <property type="term" value="F:RNA binding"/>
    <property type="evidence" value="ECO:0007669"/>
    <property type="project" value="InterPro"/>
</dbReference>
<dbReference type="GO" id="GO:0003746">
    <property type="term" value="F:translation elongation factor activity"/>
    <property type="evidence" value="ECO:0007669"/>
    <property type="project" value="InterPro"/>
</dbReference>
<dbReference type="GO" id="GO:0003743">
    <property type="term" value="F:translation initiation factor activity"/>
    <property type="evidence" value="ECO:0007669"/>
    <property type="project" value="UniProtKB-UniRule"/>
</dbReference>
<dbReference type="GO" id="GO:0045901">
    <property type="term" value="P:positive regulation of translational elongation"/>
    <property type="evidence" value="ECO:0007669"/>
    <property type="project" value="InterPro"/>
</dbReference>
<dbReference type="GO" id="GO:0045905">
    <property type="term" value="P:positive regulation of translational termination"/>
    <property type="evidence" value="ECO:0007669"/>
    <property type="project" value="InterPro"/>
</dbReference>
<dbReference type="CDD" id="cd04467">
    <property type="entry name" value="S1_aIF5A"/>
    <property type="match status" value="1"/>
</dbReference>
<dbReference type="FunFam" id="2.30.30.30:FF:000038">
    <property type="entry name" value="Translation initiation factor 5A"/>
    <property type="match status" value="1"/>
</dbReference>
<dbReference type="FunFam" id="2.40.50.140:FF:000334">
    <property type="entry name" value="Translation initiation factor 5A"/>
    <property type="match status" value="1"/>
</dbReference>
<dbReference type="Gene3D" id="2.30.30.30">
    <property type="match status" value="1"/>
</dbReference>
<dbReference type="Gene3D" id="2.40.50.140">
    <property type="entry name" value="Nucleic acid-binding proteins"/>
    <property type="match status" value="1"/>
</dbReference>
<dbReference type="HAMAP" id="MF_00085">
    <property type="entry name" value="eIF_5A"/>
    <property type="match status" value="1"/>
</dbReference>
<dbReference type="InterPro" id="IPR001884">
    <property type="entry name" value="IF5A-like"/>
</dbReference>
<dbReference type="InterPro" id="IPR048670">
    <property type="entry name" value="IF5A-like_N"/>
</dbReference>
<dbReference type="InterPro" id="IPR012340">
    <property type="entry name" value="NA-bd_OB-fold"/>
</dbReference>
<dbReference type="InterPro" id="IPR014722">
    <property type="entry name" value="Rib_uL2_dom2"/>
</dbReference>
<dbReference type="InterPro" id="IPR019769">
    <property type="entry name" value="Trans_elong_IF5A_hypusine_site"/>
</dbReference>
<dbReference type="InterPro" id="IPR022847">
    <property type="entry name" value="Transl_elong_IF5A_arc"/>
</dbReference>
<dbReference type="InterPro" id="IPR020189">
    <property type="entry name" value="Transl_elong_IF5A_C"/>
</dbReference>
<dbReference type="InterPro" id="IPR008991">
    <property type="entry name" value="Translation_prot_SH3-like_sf"/>
</dbReference>
<dbReference type="NCBIfam" id="TIGR00037">
    <property type="entry name" value="eIF_5A"/>
    <property type="match status" value="1"/>
</dbReference>
<dbReference type="NCBIfam" id="NF003076">
    <property type="entry name" value="PRK03999.1"/>
    <property type="match status" value="1"/>
</dbReference>
<dbReference type="PANTHER" id="PTHR11673">
    <property type="entry name" value="TRANSLATION INITIATION FACTOR 5A FAMILY MEMBER"/>
    <property type="match status" value="1"/>
</dbReference>
<dbReference type="Pfam" id="PF01287">
    <property type="entry name" value="eIF-5a"/>
    <property type="match status" value="1"/>
</dbReference>
<dbReference type="Pfam" id="PF21485">
    <property type="entry name" value="IF5A-like_N"/>
    <property type="match status" value="1"/>
</dbReference>
<dbReference type="PIRSF" id="PIRSF003025">
    <property type="entry name" value="eIF5A"/>
    <property type="match status" value="1"/>
</dbReference>
<dbReference type="SMART" id="SM01376">
    <property type="entry name" value="eIF-5a"/>
    <property type="match status" value="1"/>
</dbReference>
<dbReference type="SUPFAM" id="SSF50249">
    <property type="entry name" value="Nucleic acid-binding proteins"/>
    <property type="match status" value="1"/>
</dbReference>
<dbReference type="SUPFAM" id="SSF50104">
    <property type="entry name" value="Translation proteins SH3-like domain"/>
    <property type="match status" value="1"/>
</dbReference>
<dbReference type="PROSITE" id="PS00302">
    <property type="entry name" value="IF5A_HYPUSINE"/>
    <property type="match status" value="1"/>
</dbReference>
<name>IF5A_THEON</name>
<sequence>MGDKTKVQVSKLKPGRYILIDGEPCRIGNITVSSPGKHGSAKARIEAVGIFDGKVRSIVKPTSAEVDVPIIDKRTAQIIAMTPDTVQIMDMETYELYDVPIETGVADEIKGQLKEGINVEYWETLGRIKIMKIKGE</sequence>
<comment type="function">
    <text evidence="1">Functions by promoting the formation of the first peptide bond.</text>
</comment>
<comment type="subcellular location">
    <subcellularLocation>
        <location evidence="1">Cytoplasm</location>
    </subcellularLocation>
</comment>
<comment type="similarity">
    <text evidence="1">Belongs to the eIF-5A family.</text>
</comment>